<organism>
    <name type="scientific">Morus indica</name>
    <name type="common">Mulberry</name>
    <dbReference type="NCBI Taxonomy" id="248361"/>
    <lineage>
        <taxon>Eukaryota</taxon>
        <taxon>Viridiplantae</taxon>
        <taxon>Streptophyta</taxon>
        <taxon>Embryophyta</taxon>
        <taxon>Tracheophyta</taxon>
        <taxon>Spermatophyta</taxon>
        <taxon>Magnoliopsida</taxon>
        <taxon>eudicotyledons</taxon>
        <taxon>Gunneridae</taxon>
        <taxon>Pentapetalae</taxon>
        <taxon>rosids</taxon>
        <taxon>fabids</taxon>
        <taxon>Rosales</taxon>
        <taxon>Moraceae</taxon>
        <taxon>Moreae</taxon>
        <taxon>Morus</taxon>
    </lineage>
</organism>
<evidence type="ECO:0000255" key="1">
    <source>
        <dbReference type="HAMAP-Rule" id="MF_01495"/>
    </source>
</evidence>
<geneLocation type="chloroplast"/>
<keyword id="KW-0148">Chlorophyll</keyword>
<keyword id="KW-0150">Chloroplast</keyword>
<keyword id="KW-0157">Chromophore</keyword>
<keyword id="KW-0472">Membrane</keyword>
<keyword id="KW-0602">Photosynthesis</keyword>
<keyword id="KW-0604">Photosystem II</keyword>
<keyword id="KW-0934">Plastid</keyword>
<keyword id="KW-0793">Thylakoid</keyword>
<keyword id="KW-0812">Transmembrane</keyword>
<keyword id="KW-1133">Transmembrane helix</keyword>
<sequence>MGLPWYRVHTVVLNDPGRLISVHIMHTALVAGWAGSMALYELAVFDPSDPVLDPMWRQGMFVIPFMTRLGITNSWGGWSITGGTITNPGIWSYEGVAGAHIVFSGLCFLAAIWHWVYWDLEIFCDERTGKPSLDLPKIFGIHLFLSGVACFGFGAFHVTGLYGPGIWVSDPYGLTGRVQAVNPAWGVEGFDPFVPGGIASHHIAAGTLGILAGLFHLSVRPPQRLYKGLRMGNIETVLSSSIAAVFFAAFVVAGTMWYGSATTPIELFGPTRYQWDQGYFQQEIYRRVSAGLAENKSLSEAWSKIPEKLAFYDYIGNNPAKGGLFRAGSMDNGDGIAVGWLGHPIFRDKEGRELYVRRMPTFFETFPVVLVDGDGIVRADVPFRRAESKYSVEQVGVTVEFYGGELNGVSYSDPATVKKYARRAQLGEIFELDRATLKSDGVFRSSPRGWFTFGHASFALLFFFGHIWHGARTLFRDVFAGIDPDLDAQVEFGAFQKLGDPTTRRQVV</sequence>
<reference key="1">
    <citation type="submission" date="2005-09" db="EMBL/GenBank/DDBJ databases">
        <title>The chloroplast genome of mulberry: structural features and comparative analysis.</title>
        <authorList>
            <person name="Ravi V."/>
            <person name="Khurana J.P."/>
            <person name="Tyagi A.K."/>
            <person name="Khurana P."/>
        </authorList>
    </citation>
    <scope>NUCLEOTIDE SEQUENCE [LARGE SCALE GENOMIC DNA]</scope>
    <source>
        <strain>cv. K2</strain>
    </source>
</reference>
<feature type="chain" id="PRO_0000359840" description="Photosystem II CP47 reaction center protein">
    <location>
        <begin position="1"/>
        <end position="508"/>
    </location>
</feature>
<feature type="transmembrane region" description="Helical" evidence="1">
    <location>
        <begin position="21"/>
        <end position="36"/>
    </location>
</feature>
<feature type="transmembrane region" description="Helical" evidence="1">
    <location>
        <begin position="101"/>
        <end position="115"/>
    </location>
</feature>
<feature type="transmembrane region" description="Helical" evidence="1">
    <location>
        <begin position="140"/>
        <end position="156"/>
    </location>
</feature>
<feature type="transmembrane region" description="Helical" evidence="1">
    <location>
        <begin position="203"/>
        <end position="218"/>
    </location>
</feature>
<feature type="transmembrane region" description="Helical" evidence="1">
    <location>
        <begin position="237"/>
        <end position="252"/>
    </location>
</feature>
<feature type="transmembrane region" description="Helical" evidence="1">
    <location>
        <begin position="457"/>
        <end position="472"/>
    </location>
</feature>
<name>PSBB_MORIN</name>
<protein>
    <recommendedName>
        <fullName evidence="1">Photosystem II CP47 reaction center protein</fullName>
    </recommendedName>
    <alternativeName>
        <fullName evidence="1">PSII 47 kDa protein</fullName>
    </alternativeName>
    <alternativeName>
        <fullName evidence="1">Protein CP-47</fullName>
    </alternativeName>
</protein>
<dbReference type="EMBL" id="DQ226511">
    <property type="protein sequence ID" value="ABB20983.1"/>
    <property type="molecule type" value="Genomic_DNA"/>
</dbReference>
<dbReference type="RefSeq" id="YP_762287.1">
    <property type="nucleotide sequence ID" value="NC_008359.1"/>
</dbReference>
<dbReference type="SMR" id="Q09WZ1"/>
<dbReference type="GeneID" id="4290646"/>
<dbReference type="GO" id="GO:0009535">
    <property type="term" value="C:chloroplast thylakoid membrane"/>
    <property type="evidence" value="ECO:0007669"/>
    <property type="project" value="UniProtKB-SubCell"/>
</dbReference>
<dbReference type="GO" id="GO:0009523">
    <property type="term" value="C:photosystem II"/>
    <property type="evidence" value="ECO:0007669"/>
    <property type="project" value="UniProtKB-KW"/>
</dbReference>
<dbReference type="GO" id="GO:0016168">
    <property type="term" value="F:chlorophyll binding"/>
    <property type="evidence" value="ECO:0007669"/>
    <property type="project" value="UniProtKB-UniRule"/>
</dbReference>
<dbReference type="GO" id="GO:0045156">
    <property type="term" value="F:electron transporter, transferring electrons within the cyclic electron transport pathway of photosynthesis activity"/>
    <property type="evidence" value="ECO:0007669"/>
    <property type="project" value="InterPro"/>
</dbReference>
<dbReference type="GO" id="GO:0009772">
    <property type="term" value="P:photosynthetic electron transport in photosystem II"/>
    <property type="evidence" value="ECO:0007669"/>
    <property type="project" value="InterPro"/>
</dbReference>
<dbReference type="FunFam" id="3.10.680.10:FF:000001">
    <property type="entry name" value="Photosystem II CP47 reaction center protein"/>
    <property type="match status" value="1"/>
</dbReference>
<dbReference type="Gene3D" id="3.10.680.10">
    <property type="entry name" value="Photosystem II CP47 reaction center protein"/>
    <property type="match status" value="1"/>
</dbReference>
<dbReference type="HAMAP" id="MF_01495">
    <property type="entry name" value="PSII_PsbB_CP47"/>
    <property type="match status" value="1"/>
</dbReference>
<dbReference type="InterPro" id="IPR000932">
    <property type="entry name" value="PS_antenna-like"/>
</dbReference>
<dbReference type="InterPro" id="IPR036001">
    <property type="entry name" value="PS_II_antenna-like_sf"/>
</dbReference>
<dbReference type="InterPro" id="IPR017486">
    <property type="entry name" value="PSII_PsbB"/>
</dbReference>
<dbReference type="NCBIfam" id="TIGR03039">
    <property type="entry name" value="PS_II_CP47"/>
    <property type="match status" value="1"/>
</dbReference>
<dbReference type="PANTHER" id="PTHR33180">
    <property type="entry name" value="PHOTOSYSTEM II CP43 REACTION CENTER PROTEIN"/>
    <property type="match status" value="1"/>
</dbReference>
<dbReference type="PANTHER" id="PTHR33180:SF38">
    <property type="entry name" value="PHOTOSYSTEM II CP47 REACTION CENTER PROTEIN"/>
    <property type="match status" value="1"/>
</dbReference>
<dbReference type="Pfam" id="PF00421">
    <property type="entry name" value="PSII"/>
    <property type="match status" value="1"/>
</dbReference>
<dbReference type="SUPFAM" id="SSF161077">
    <property type="entry name" value="Photosystem II antenna protein-like"/>
    <property type="match status" value="1"/>
</dbReference>
<gene>
    <name evidence="1" type="primary">psbB</name>
    <name type="ordered locus">MoinCp047</name>
</gene>
<proteinExistence type="inferred from homology"/>
<comment type="function">
    <text evidence="1">One of the components of the core complex of photosystem II (PSII). It binds chlorophyll and helps catalyze the primary light-induced photochemical processes of PSII. PSII is a light-driven water:plastoquinone oxidoreductase, using light energy to abstract electrons from H(2)O, generating O(2) and a proton gradient subsequently used for ATP formation.</text>
</comment>
<comment type="cofactor">
    <text evidence="1">Binds multiple chlorophylls. PSII binds additional chlorophylls, carotenoids and specific lipids.</text>
</comment>
<comment type="subunit">
    <text evidence="1">PSII is composed of 1 copy each of membrane proteins PsbA, PsbB, PsbC, PsbD, PsbE, PsbF, PsbH, PsbI, PsbJ, PsbK, PsbL, PsbM, PsbT, PsbX, PsbY, PsbZ, Psb30/Ycf12, at least 3 peripheral proteins of the oxygen-evolving complex and a large number of cofactors. It forms dimeric complexes.</text>
</comment>
<comment type="subcellular location">
    <subcellularLocation>
        <location evidence="1">Plastid</location>
        <location evidence="1">Chloroplast thylakoid membrane</location>
        <topology evidence="1">Multi-pass membrane protein</topology>
    </subcellularLocation>
</comment>
<comment type="similarity">
    <text evidence="1">Belongs to the PsbB/PsbC family. PsbB subfamily.</text>
</comment>
<accession>Q09WZ1</accession>